<comment type="function">
    <text evidence="3 10 15 16 17">May link Golgi membranes to the cytoskeleton and participate in the tensile force required for vesicle budding from the Golgi. Thereby, may play a role in Golgi membrane trafficking and could indirectly give its flattened shape to the Golgi apparatus (PubMed:19837035). Alternatively, in concert with LURAP1 and CDC42BPA/CDC42BPB, has been involved in modulating lamellar actomyosin retrograde flow that is crucial to cell protrusion and migration (By similarity). May be involved in the maintenance of the stromal cell architectures required for cell to cell contact (PubMed:10733906). Regulates trafficking, expression, and activation of innate immune receptors on macrophages. Plays a role to suppress inflammatory responsiveness of macrophages via a mechanism that modulates CD14 trafficking (PubMed:25965346). Acts as a receptor of surfactant-associated protein A (SFTPA1/SP-A) and plays an important role in internalization and clearance of SFTPA1-opsonized S.aureus by alveolar macrophages (PubMed:21123169). Strongly enhances natural killer cell cytotoxicity (By similarity).</text>
</comment>
<comment type="subunit">
    <text evidence="3 11 14">Homodimer. Forms a tripartite complex with CDC42BPA/CDC42BPB and LURAP1 with the latter acting as an adapter connecting CDC42BPA/CDC42BPB and MYO18A (By similarity). Binds F-actin; regulated by ADP and GOLPH3 (PubMed:15582604). Interacts with GOLPH3; the interaction is direct and may link Golgi membranes to the actin cytoskeleton (By similarity). Interacts with JAK3 (PubMed:10733938). Interacts with MSR1 and CD14 (By similarity).</text>
</comment>
<comment type="subcellular location">
    <subcellularLocation>
        <location evidence="3">Golgi apparatus</location>
    </subcellularLocation>
    <subcellularLocation>
        <location evidence="3">Golgi apparatus</location>
        <location evidence="3">trans-Golgi network</location>
    </subcellularLocation>
    <subcellularLocation>
        <location evidence="2">Golgi outpost</location>
    </subcellularLocation>
    <subcellularLocation>
        <location evidence="2">Cytoplasm</location>
        <location evidence="2">Cytoskeleton</location>
        <location evidence="2">Microtubule organizing center</location>
    </subcellularLocation>
    <text evidence="2 3">Recruited to the Golgi apparatus by GOLPH3 (By similarity). Localizes to the postsynaptic Golgi apparatus region, also named Golgi outpost, which shapes dendrite morphology by functioning as sites of acentrosomal microtubule nucleation (By similarity).</text>
</comment>
<comment type="subcellular location">
    <molecule>Isoform 1</molecule>
    <subcellularLocation>
        <location evidence="12">Endoplasmic reticulum-Golgi intermediate compartment</location>
    </subcellularLocation>
    <subcellularLocation>
        <location evidence="12">Cytoplasm</location>
        <location evidence="12">Cytoskeleton</location>
    </subcellularLocation>
    <text evidence="12">Colocalizes with actin.</text>
</comment>
<comment type="subcellular location">
    <molecule>Isoform 2</molecule>
    <subcellularLocation>
        <location evidence="12">Cytoplasm</location>
    </subcellularLocation>
    <text evidence="12">Lacks the PDZ domain. Diffusely localized in the cytoplasm.</text>
</comment>
<comment type="alternative products">
    <event type="alternative splicing"/>
    <isoform>
        <id>Q9JMH9-3</id>
        <name>3</name>
        <name evidence="23">SP-R210L</name>
        <sequence type="displayed"/>
    </isoform>
    <isoform>
        <id>Q9JMH9-1</id>
        <name>1</name>
        <name>Alpha</name>
        <sequence type="described" ref="VSP_023062"/>
    </isoform>
    <isoform>
        <id>Q9JMH9-2</id>
        <name>2</name>
        <name>Beta</name>
        <sequence type="described" ref="VSP_007873 VSP_007874"/>
    </isoform>
    <isoform>
        <id>Q9JMH9-4</id>
        <name>4</name>
        <sequence type="described" ref="VSP_023061 VSP_023062"/>
    </isoform>
    <isoform>
        <id>Q9JMH9-5</id>
        <name>5</name>
        <sequence type="described" ref="VSP_007873 VSP_007874 VSP_023062"/>
    </isoform>
    <isoform>
        <id>Q9JMH9-6</id>
        <name>6</name>
        <sequence type="described" ref="VSP_023060"/>
    </isoform>
    <isoform>
        <id>Q9JMH9-7</id>
        <name>7</name>
        <sequence type="described" ref="VSP_007873 VSP_023059 VSP_023062"/>
    </isoform>
</comment>
<comment type="tissue specificity">
    <text evidence="17">Isoform 1; Expressed ubiquitously. Isoform 2: Specifically expressed in most hematopoietic cells. Isoform 3: Predominantly expressed in alveolar macrophages (PubMed:25965346).</text>
</comment>
<comment type="domain">
    <text evidence="1">The myosin motor domain binds ADP and ATP but has no intrinsic ATPase activity. Mediates ADP-dependent binding to actin (By similarity).</text>
</comment>
<comment type="PTM">
    <text evidence="13">Phosphorylated on tyrosine upon CSF1R activation. Isoform 6 is phosphorylated on Ser-340.</text>
</comment>
<comment type="similarity">
    <text evidence="24">Belongs to the TRAFAC class myosin-kinesin ATPase superfamily. Myosin family.</text>
</comment>
<gene>
    <name type="primary">Myo18a</name>
    <name evidence="20" type="synonym">Myspdz</name>
</gene>
<proteinExistence type="evidence at protein level"/>
<evidence type="ECO:0000250" key="1"/>
<evidence type="ECO:0000250" key="2">
    <source>
        <dbReference type="UniProtKB" id="D3ZFD0"/>
    </source>
</evidence>
<evidence type="ECO:0000250" key="3">
    <source>
        <dbReference type="UniProtKB" id="Q92614"/>
    </source>
</evidence>
<evidence type="ECO:0000255" key="4"/>
<evidence type="ECO:0000255" key="5">
    <source>
        <dbReference type="PROSITE-ProRule" id="PRU00116"/>
    </source>
</evidence>
<evidence type="ECO:0000255" key="6">
    <source>
        <dbReference type="PROSITE-ProRule" id="PRU00143"/>
    </source>
</evidence>
<evidence type="ECO:0000255" key="7">
    <source>
        <dbReference type="PROSITE-ProRule" id="PRU00782"/>
    </source>
</evidence>
<evidence type="ECO:0000255" key="8">
    <source>
        <dbReference type="PROSITE-ProRule" id="PRU01190"/>
    </source>
</evidence>
<evidence type="ECO:0000256" key="9">
    <source>
        <dbReference type="SAM" id="MobiDB-lite"/>
    </source>
</evidence>
<evidence type="ECO:0000269" key="10">
    <source>
    </source>
</evidence>
<evidence type="ECO:0000269" key="11">
    <source>
    </source>
</evidence>
<evidence type="ECO:0000269" key="12">
    <source>
    </source>
</evidence>
<evidence type="ECO:0000269" key="13">
    <source>
    </source>
</evidence>
<evidence type="ECO:0000269" key="14">
    <source>
    </source>
</evidence>
<evidence type="ECO:0000269" key="15">
    <source>
    </source>
</evidence>
<evidence type="ECO:0000269" key="16">
    <source>
    </source>
</evidence>
<evidence type="ECO:0000269" key="17">
    <source>
    </source>
</evidence>
<evidence type="ECO:0000303" key="18">
    <source>
    </source>
</evidence>
<evidence type="ECO:0000303" key="19">
    <source>
    </source>
</evidence>
<evidence type="ECO:0000303" key="20">
    <source>
    </source>
</evidence>
<evidence type="ECO:0000303" key="21">
    <source>
    </source>
</evidence>
<evidence type="ECO:0000303" key="22">
    <source>
    </source>
</evidence>
<evidence type="ECO:0000303" key="23">
    <source>
    </source>
</evidence>
<evidence type="ECO:0000305" key="24"/>
<evidence type="ECO:0007744" key="25">
    <source>
    </source>
</evidence>
<evidence type="ECO:0007744" key="26">
    <source>
    </source>
</evidence>
<evidence type="ECO:0007744" key="27">
    <source>
    </source>
</evidence>
<evidence type="ECO:0007744" key="28">
    <source>
    </source>
</evidence>
<sequence>MFNLMKKDKDKDGGRKEKKEKKEKKERMSAAELRSLEEMSMRRGFFNLNRSSKRESKTRLEISNPIPIKVASGSDLHLTDIDSDSNRGSIILDSGHLSTASSSDDLKGEEGSFRGSVLQRAAKFGSLAKQNSQMIVKRFSFSQRSRDESASETSTPSEHSAAPSPQVEVRTLEGQLMQHPGLGIPRPGPRSRVPELVTKRFPADLRLPALVPPPPPALRELELQRRPTGDFGFSLRRTTMLDRAPEGQAYRRVVHFAEPGAGTKDLALGLVPGDRLVEINGQNVENKSRDEIVEMIRQSGDSVRLKVQPIPELSELSRSWLRTGEGHRREPADAKTEEQIAAEEAWYETEKVWLVHRDGFSLASQLKSEELSLPEGKARVKLDHDGAILDVDEDDIEKANAPSCDRLEDLASLVYLNESSVLHTLRQRYGASLLHTYAGPSLLVLSTRGAPAVYSEKVMHMFKGCRREDMAPHIYAVAQTAYRAMLMSRQDQSIVLLGSSGSGKTTSFQHLVQYLATIAGTSGTKVFSVEKWQALSTLLEAFGNSPTIMNGSATRFSQILSLDFDQAGQVASASIQTMLLEKLRVARRPASEATFNVFYYLLACGDATLRTELHLNHLAENNVFGIVPLSKPEEKQKAAQQFSKLQAAMKVLAISPEEQKTCWLILASIYHLGAAGATKEAAEAGRKQFARHEWAQKAAYLLGCSLEELSSAIFKHQLKGGTLQRSTSFRQGPEESGLGEGTKLSALECLEGMASGLYSELFTLLISLVNRALKSSQHSLCSMMIVDTPGFQNPEWGGSARGASFEELCHNYAQDRLQRLFHERTFLQELERYKEDNIELAFDDLEPVADDSVAAVDQASHLVRSLAHADEARGLLWLLEEEALVPGATEDALLDRLFSYYGPQEGDKKGQSPLLRSSKPRHFLLGHSHGTNWVEYNVAGWLNYTKQNPATQNAPRLLQDSQKKIISNLFLGRAGSATVLSGSIAGLEGGSQLALRRATSMRKTFTTGMAAVKKKSLCIQIKLQVDALIDTIKRSKMHFVHCFLPVAEGWPGEPRSASSRRVSSSSELDLPPGDPCEAGLLQLDVSLLRAQLRGSRLLDAMRMYRQGYPDHMVFSEFRRRFDVLAPHLTKKHGRNYIVVDEKRAVEELLESLDLEKSSCCLGLSRVFFRAGTLARLEEQRDEQTSRHLTLFQAACRGYLARQHFKKRKIQDLAIRCVQKNIKKNKGVKDWPWWKLFTTVRPLIQVQLSEEQIRNKDEEIQQLRSKLEKVEKERNELRLSSDRLETRISELTSELTDERNTGESASQLLDAETAERLRTEKEMKELQTQYDALKKQMEVMEMEVMEARLIRAAEINGEVDDDDAGGEWRLKYERAVREVDFTKKRLQQELEDKMEVEQQSRRQLERRLGDLQADSDESQRALQQLKKKCQRLTAELQDTKLHLEGQQVRNHELEKKQRRFDSELSQAHEETQREKLQREKLQREKDMLLAEAFSLKQQMEEKDLDIAGFTQKVVSLEAELQDISSQESKDEASLAKVKKQLRDLEAKVKDQEEELDEQAGSIQMLEQAKLRLEMEMERMRQTHSKEMESRDEEVEEARQSCQKKLKQMEVQLEEEYEDKQKALREKRELESKLSTLSDQVNQRDFESEKRLRKDLKRTKALLADAQIMLDHLKNNAPSKREIAQLKNQLEESEFTCAAAVKARKAMEVEMEDLHLQIDDIAKAKTALEEQLSRLQREKNEIQNRLEEDQEDMNELMKKHKAAVAQASRDMAQMNDLQAQIEESNKEKQELQEKLQALQSQVEFLEQSMVDKSLVSRQEAKIRELETRLEFEKTQVKRLENLASRLKETMEKLTEERDQRAAAENREKEQNKRLQRQLRDTKEEMSELARKEAEASRKKHELEMDLESLEAANQSLQADLKLAFKRIGDLQAAIEDEMESDENEDLINSLQDMVTKYQKKKNKLEGDSDVDSELEDRVDGVKSWLSKNKGPSKAPSDDGSLKSSSPTSHWKPLAPDPSDDEHDPVDSISRPRFSHSYLSDSDTEAKLTETSA</sequence>
<protein>
    <recommendedName>
        <fullName>Unconventional myosin-XVIIIa</fullName>
    </recommendedName>
    <alternativeName>
        <fullName>Molecule associated with JAK3 N-terminus</fullName>
        <shortName>MAJN</shortName>
    </alternativeName>
    <alternativeName>
        <fullName>Myosin containing a PDZ domain</fullName>
    </alternativeName>
    <alternativeName>
        <fullName evidence="23">Surfactant protein receptor SP-R210</fullName>
        <shortName evidence="23">SP-R210</shortName>
    </alternativeName>
</protein>
<feature type="chain" id="PRO_0000123477" description="Unconventional myosin-XVIIIa">
    <location>
        <begin position="1"/>
        <end position="2050"/>
    </location>
</feature>
<feature type="domain" description="PDZ" evidence="6">
    <location>
        <begin position="220"/>
        <end position="311"/>
    </location>
</feature>
<feature type="domain" description="Myosin N-terminal SH3-like" evidence="8">
    <location>
        <begin position="349"/>
        <end position="401"/>
    </location>
</feature>
<feature type="domain" description="Myosin motor" evidence="7">
    <location>
        <begin position="405"/>
        <end position="1181"/>
    </location>
</feature>
<feature type="domain" description="IQ" evidence="5">
    <location>
        <begin position="1184"/>
        <end position="1213"/>
    </location>
</feature>
<feature type="region of interest" description="Mediates nucleotide-independent binding to F-actin and interaction with GOLPH3" evidence="3">
    <location>
        <begin position="1"/>
        <end position="398"/>
    </location>
</feature>
<feature type="region of interest" description="Disordered" evidence="9">
    <location>
        <begin position="1"/>
        <end position="34"/>
    </location>
</feature>
<feature type="region of interest" description="Disordered" evidence="9">
    <location>
        <begin position="140"/>
        <end position="167"/>
    </location>
</feature>
<feature type="region of interest" description="Disordered" evidence="9">
    <location>
        <begin position="1051"/>
        <end position="1071"/>
    </location>
</feature>
<feature type="region of interest" description="Disordered" evidence="9">
    <location>
        <begin position="1448"/>
        <end position="1477"/>
    </location>
</feature>
<feature type="region of interest" description="Disordered" evidence="9">
    <location>
        <begin position="1848"/>
        <end position="1897"/>
    </location>
</feature>
<feature type="region of interest" description="Disordered" evidence="9">
    <location>
        <begin position="1955"/>
        <end position="2050"/>
    </location>
</feature>
<feature type="coiled-coil region" evidence="4">
    <location>
        <begin position="1242"/>
        <end position="1967"/>
    </location>
</feature>
<feature type="short sequence motif" description="Interaction with actin" evidence="1">
    <location>
        <begin position="114"/>
        <end position="118"/>
    </location>
</feature>
<feature type="compositionally biased region" description="Basic and acidic residues" evidence="9">
    <location>
        <begin position="1"/>
        <end position="17"/>
    </location>
</feature>
<feature type="compositionally biased region" description="Basic and acidic residues" evidence="9">
    <location>
        <begin position="23"/>
        <end position="34"/>
    </location>
</feature>
<feature type="compositionally biased region" description="Low complexity" evidence="9">
    <location>
        <begin position="1055"/>
        <end position="1066"/>
    </location>
</feature>
<feature type="compositionally biased region" description="Basic and acidic residues" evidence="9">
    <location>
        <begin position="2041"/>
        <end position="2050"/>
    </location>
</feature>
<feature type="binding site" evidence="4">
    <location>
        <begin position="498"/>
        <end position="505"/>
    </location>
    <ligand>
        <name>ATP</name>
        <dbReference type="ChEBI" id="CHEBI:30616"/>
    </ligand>
</feature>
<feature type="modified residue" description="Phosphoserine" evidence="3">
    <location>
        <position position="35"/>
    </location>
</feature>
<feature type="modified residue" description="Phosphoserine" evidence="3">
    <location>
        <position position="52"/>
    </location>
</feature>
<feature type="modified residue" description="Phosphoserine" evidence="26 28">
    <location>
        <position position="72"/>
    </location>
</feature>
<feature type="modified residue" description="Phosphoserine" evidence="3">
    <location>
        <position position="74"/>
    </location>
</feature>
<feature type="modified residue" description="Phosphothreonine" evidence="3">
    <location>
        <position position="79"/>
    </location>
</feature>
<feature type="modified residue" description="Phosphoserine" evidence="26 28">
    <location>
        <position position="83"/>
    </location>
</feature>
<feature type="modified residue" description="Phosphoserine" evidence="3">
    <location>
        <position position="98"/>
    </location>
</feature>
<feature type="modified residue" description="Phosphothreonine" evidence="3">
    <location>
        <position position="99"/>
    </location>
</feature>
<feature type="modified residue" description="Phosphoserine" evidence="28">
    <location>
        <position position="102"/>
    </location>
</feature>
<feature type="modified residue" description="Phosphoserine" evidence="28">
    <location>
        <position position="103"/>
    </location>
</feature>
<feature type="modified residue" description="Phosphoserine" evidence="3">
    <location>
        <position position="140"/>
    </location>
</feature>
<feature type="modified residue" description="Phosphoserine" evidence="3">
    <location>
        <position position="145"/>
    </location>
</feature>
<feature type="modified residue" description="Phosphoserine" evidence="28">
    <location>
        <position position="157"/>
    </location>
</feature>
<feature type="modified residue" description="Phosphoserine" evidence="28">
    <location>
        <position position="160"/>
    </location>
</feature>
<feature type="modified residue" description="Phosphoserine" evidence="26 28">
    <location>
        <position position="164"/>
    </location>
</feature>
<feature type="modified residue" description="Phosphoserine" evidence="3">
    <location>
        <position position="234"/>
    </location>
</feature>
<feature type="modified residue" description="Phosphoserine" evidence="28">
    <location>
        <position position="983"/>
    </location>
</feature>
<feature type="modified residue" description="Phosphoserine" evidence="3">
    <location>
        <position position="1063"/>
    </location>
</feature>
<feature type="modified residue" description="Phosphoserine" evidence="3">
    <location>
        <position position="1064"/>
    </location>
</feature>
<feature type="modified residue" description="Phosphoserine" evidence="3">
    <location>
        <position position="1066"/>
    </location>
</feature>
<feature type="modified residue" description="Phosphoserine" evidence="3">
    <location>
        <position position="1636"/>
    </location>
</feature>
<feature type="modified residue" description="Phosphoserine" evidence="3">
    <location>
        <position position="1938"/>
    </location>
</feature>
<feature type="modified residue" description="Phosphoserine" evidence="26 28">
    <location>
        <position position="1966"/>
    </location>
</feature>
<feature type="modified residue" description="Phosphoserine" evidence="3">
    <location>
        <position position="1970"/>
    </location>
</feature>
<feature type="modified residue" description="Phosphoserine" evidence="28">
    <location>
        <position position="1994"/>
    </location>
</feature>
<feature type="modified residue" description="Phosphoserine" evidence="3">
    <location>
        <position position="1998"/>
    </location>
</feature>
<feature type="modified residue" description="Phosphoserine" evidence="3">
    <location>
        <position position="2002"/>
    </location>
</feature>
<feature type="modified residue" description="Phosphoserine" evidence="3">
    <location>
        <position position="2003"/>
    </location>
</feature>
<feature type="modified residue" description="Phosphoserine" evidence="28">
    <location>
        <position position="2016"/>
    </location>
</feature>
<feature type="modified residue" description="Phosphoserine" evidence="28">
    <location>
        <position position="2032"/>
    </location>
</feature>
<feature type="modified residue" description="Phosphoserine" evidence="26 27 28">
    <location>
        <position position="2037"/>
    </location>
</feature>
<feature type="modified residue" description="Phosphoserine" evidence="26 27 28">
    <location>
        <position position="2039"/>
    </location>
</feature>
<feature type="modified residue" description="Phosphothreonine" evidence="28">
    <location>
        <position position="2041"/>
    </location>
</feature>
<feature type="splice variant" id="VSP_007873" description="In isoform 2, isoform 5 and isoform 7." evidence="22">
    <location>
        <begin position="1"/>
        <end position="331"/>
    </location>
</feature>
<feature type="splice variant" id="VSP_007874" description="In isoform 2 and isoform 5." evidence="22">
    <original>AD</original>
    <variation>ML</variation>
    <location>
        <begin position="332"/>
        <end position="333"/>
    </location>
</feature>
<feature type="splice variant" id="VSP_023059" description="In isoform 7." evidence="24">
    <original>AD</original>
    <variation>MLLDPEAASPAYSQ</variation>
    <location>
        <begin position="332"/>
        <end position="333"/>
    </location>
</feature>
<feature type="splice variant" id="VSP_023060" description="In isoform 6." evidence="24">
    <original>D</original>
    <variation>DLDPEAASPAYSQ</variation>
    <location>
        <position position="333"/>
    </location>
</feature>
<feature type="splice variant" id="VSP_023061" description="In isoform 4." evidence="24">
    <location>
        <begin position="1567"/>
        <end position="1603"/>
    </location>
</feature>
<feature type="splice variant" id="VSP_023062" description="In isoform 1, isoform 4, isoform 5 and isoform 7." evidence="18 19 21 22">
    <location>
        <begin position="1948"/>
        <end position="1962"/>
    </location>
</feature>
<feature type="mutagenesis site" description="Loss of function." evidence="15">
    <original>GK</original>
    <variation>SA</variation>
    <location>
        <begin position="503"/>
        <end position="504"/>
    </location>
</feature>
<feature type="sequence conflict" description="In Ref. 2; BAE28009." evidence="24" ref="2">
    <original>A</original>
    <variation>T</variation>
    <location>
        <position position="399"/>
    </location>
</feature>
<feature type="sequence conflict" description="In Ref. 2; BAE42402." evidence="24" ref="2">
    <original>R</original>
    <variation>Q</variation>
    <location>
        <position position="466"/>
    </location>
</feature>
<feature type="sequence conflict" description="In Ref. 2; BAE42402." evidence="24" ref="2">
    <location>
        <begin position="680"/>
        <end position="683"/>
    </location>
</feature>
<feature type="sequence conflict" description="In Ref. 2; BAE28009." evidence="24" ref="2">
    <original>E</original>
    <variation>EPLEEQD</variation>
    <location>
        <position position="680"/>
    </location>
</feature>
<feature type="sequence conflict" description="In Ref. 2; BAE42402." evidence="24" ref="2">
    <original>G</original>
    <variation>D</variation>
    <location>
        <position position="798"/>
    </location>
</feature>
<feature type="sequence conflict" description="In Ref. 2; BAE42402." evidence="24" ref="2">
    <original>D</original>
    <variation>N</variation>
    <location>
        <position position="1362"/>
    </location>
</feature>
<feature type="sequence conflict" description="In Ref. 2; BAE28009." evidence="24" ref="2">
    <original>K</original>
    <variation>R</variation>
    <location>
        <position position="1655"/>
    </location>
</feature>
<feature type="sequence conflict" description="In Ref. 5; AAV80766." evidence="24" ref="5">
    <original>G</original>
    <variation>R</variation>
    <location>
        <position position="1978"/>
    </location>
</feature>
<feature type="sequence conflict" description="In Ref. 5; AAV80765." evidence="24" ref="5">
    <original>S</original>
    <variation>P</variation>
    <location>
        <position position="1990"/>
    </location>
</feature>
<feature type="sequence conflict" description="In Ref. 5; AAV80767." evidence="24" ref="5">
    <original>S</original>
    <variation>F</variation>
    <location>
        <position position="2027"/>
    </location>
</feature>
<feature type="modified residue" description="Phosphoserine" evidence="25">
    <location sequence="Q9JMH9-6">
        <position position="340"/>
    </location>
</feature>
<reference key="1">
    <citation type="journal article" date="2000" name="Biochem. Biophys. Res. Commun.">
        <title>Isolation of a novel PDZ-containing myosin from hematopoietic supportive bone marrow stromal cell lines.</title>
        <authorList>
            <person name="Furusawa T."/>
            <person name="Ikawa S."/>
            <person name="Yanai N."/>
            <person name="Obinata M."/>
        </authorList>
    </citation>
    <scope>NUCLEOTIDE SEQUENCE [MRNA] (ISOFORM 1)</scope>
    <scope>FUNCTION</scope>
    <source>
        <strain>C57BL/6J</strain>
        <tissue>Spleen</tissue>
    </source>
</reference>
<reference key="2">
    <citation type="journal article" date="2005" name="Science">
        <title>The transcriptional landscape of the mammalian genome.</title>
        <authorList>
            <person name="Carninci P."/>
            <person name="Kasukawa T."/>
            <person name="Katayama S."/>
            <person name="Gough J."/>
            <person name="Frith M.C."/>
            <person name="Maeda N."/>
            <person name="Oyama R."/>
            <person name="Ravasi T."/>
            <person name="Lenhard B."/>
            <person name="Wells C."/>
            <person name="Kodzius R."/>
            <person name="Shimokawa K."/>
            <person name="Bajic V.B."/>
            <person name="Brenner S.E."/>
            <person name="Batalov S."/>
            <person name="Forrest A.R."/>
            <person name="Zavolan M."/>
            <person name="Davis M.J."/>
            <person name="Wilming L.G."/>
            <person name="Aidinis V."/>
            <person name="Allen J.E."/>
            <person name="Ambesi-Impiombato A."/>
            <person name="Apweiler R."/>
            <person name="Aturaliya R.N."/>
            <person name="Bailey T.L."/>
            <person name="Bansal M."/>
            <person name="Baxter L."/>
            <person name="Beisel K.W."/>
            <person name="Bersano T."/>
            <person name="Bono H."/>
            <person name="Chalk A.M."/>
            <person name="Chiu K.P."/>
            <person name="Choudhary V."/>
            <person name="Christoffels A."/>
            <person name="Clutterbuck D.R."/>
            <person name="Crowe M.L."/>
            <person name="Dalla E."/>
            <person name="Dalrymple B.P."/>
            <person name="de Bono B."/>
            <person name="Della Gatta G."/>
            <person name="di Bernardo D."/>
            <person name="Down T."/>
            <person name="Engstrom P."/>
            <person name="Fagiolini M."/>
            <person name="Faulkner G."/>
            <person name="Fletcher C.F."/>
            <person name="Fukushima T."/>
            <person name="Furuno M."/>
            <person name="Futaki S."/>
            <person name="Gariboldi M."/>
            <person name="Georgii-Hemming P."/>
            <person name="Gingeras T.R."/>
            <person name="Gojobori T."/>
            <person name="Green R.E."/>
            <person name="Gustincich S."/>
            <person name="Harbers M."/>
            <person name="Hayashi Y."/>
            <person name="Hensch T.K."/>
            <person name="Hirokawa N."/>
            <person name="Hill D."/>
            <person name="Huminiecki L."/>
            <person name="Iacono M."/>
            <person name="Ikeo K."/>
            <person name="Iwama A."/>
            <person name="Ishikawa T."/>
            <person name="Jakt M."/>
            <person name="Kanapin A."/>
            <person name="Katoh M."/>
            <person name="Kawasawa Y."/>
            <person name="Kelso J."/>
            <person name="Kitamura H."/>
            <person name="Kitano H."/>
            <person name="Kollias G."/>
            <person name="Krishnan S.P."/>
            <person name="Kruger A."/>
            <person name="Kummerfeld S.K."/>
            <person name="Kurochkin I.V."/>
            <person name="Lareau L.F."/>
            <person name="Lazarevic D."/>
            <person name="Lipovich L."/>
            <person name="Liu J."/>
            <person name="Liuni S."/>
            <person name="McWilliam S."/>
            <person name="Madan Babu M."/>
            <person name="Madera M."/>
            <person name="Marchionni L."/>
            <person name="Matsuda H."/>
            <person name="Matsuzawa S."/>
            <person name="Miki H."/>
            <person name="Mignone F."/>
            <person name="Miyake S."/>
            <person name="Morris K."/>
            <person name="Mottagui-Tabar S."/>
            <person name="Mulder N."/>
            <person name="Nakano N."/>
            <person name="Nakauchi H."/>
            <person name="Ng P."/>
            <person name="Nilsson R."/>
            <person name="Nishiguchi S."/>
            <person name="Nishikawa S."/>
            <person name="Nori F."/>
            <person name="Ohara O."/>
            <person name="Okazaki Y."/>
            <person name="Orlando V."/>
            <person name="Pang K.C."/>
            <person name="Pavan W.J."/>
            <person name="Pavesi G."/>
            <person name="Pesole G."/>
            <person name="Petrovsky N."/>
            <person name="Piazza S."/>
            <person name="Reed J."/>
            <person name="Reid J.F."/>
            <person name="Ring B.Z."/>
            <person name="Ringwald M."/>
            <person name="Rost B."/>
            <person name="Ruan Y."/>
            <person name="Salzberg S.L."/>
            <person name="Sandelin A."/>
            <person name="Schneider C."/>
            <person name="Schoenbach C."/>
            <person name="Sekiguchi K."/>
            <person name="Semple C.A."/>
            <person name="Seno S."/>
            <person name="Sessa L."/>
            <person name="Sheng Y."/>
            <person name="Shibata Y."/>
            <person name="Shimada H."/>
            <person name="Shimada K."/>
            <person name="Silva D."/>
            <person name="Sinclair B."/>
            <person name="Sperling S."/>
            <person name="Stupka E."/>
            <person name="Sugiura K."/>
            <person name="Sultana R."/>
            <person name="Takenaka Y."/>
            <person name="Taki K."/>
            <person name="Tammoja K."/>
            <person name="Tan S.L."/>
            <person name="Tang S."/>
            <person name="Taylor M.S."/>
            <person name="Tegner J."/>
            <person name="Teichmann S.A."/>
            <person name="Ueda H.R."/>
            <person name="van Nimwegen E."/>
            <person name="Verardo R."/>
            <person name="Wei C.L."/>
            <person name="Yagi K."/>
            <person name="Yamanishi H."/>
            <person name="Zabarovsky E."/>
            <person name="Zhu S."/>
            <person name="Zimmer A."/>
            <person name="Hide W."/>
            <person name="Bult C."/>
            <person name="Grimmond S.M."/>
            <person name="Teasdale R.D."/>
            <person name="Liu E.T."/>
            <person name="Brusic V."/>
            <person name="Quackenbush J."/>
            <person name="Wahlestedt C."/>
            <person name="Mattick J.S."/>
            <person name="Hume D.A."/>
            <person name="Kai C."/>
            <person name="Sasaki D."/>
            <person name="Tomaru Y."/>
            <person name="Fukuda S."/>
            <person name="Kanamori-Katayama M."/>
            <person name="Suzuki M."/>
            <person name="Aoki J."/>
            <person name="Arakawa T."/>
            <person name="Iida J."/>
            <person name="Imamura K."/>
            <person name="Itoh M."/>
            <person name="Kato T."/>
            <person name="Kawaji H."/>
            <person name="Kawagashira N."/>
            <person name="Kawashima T."/>
            <person name="Kojima M."/>
            <person name="Kondo S."/>
            <person name="Konno H."/>
            <person name="Nakano K."/>
            <person name="Ninomiya N."/>
            <person name="Nishio T."/>
            <person name="Okada M."/>
            <person name="Plessy C."/>
            <person name="Shibata K."/>
            <person name="Shiraki T."/>
            <person name="Suzuki S."/>
            <person name="Tagami M."/>
            <person name="Waki K."/>
            <person name="Watahiki A."/>
            <person name="Okamura-Oho Y."/>
            <person name="Suzuki H."/>
            <person name="Kawai J."/>
            <person name="Hayashizaki Y."/>
        </authorList>
    </citation>
    <scope>NUCLEOTIDE SEQUENCE [LARGE SCALE MRNA] (ISOFORM 5)</scope>
    <scope>NUCLEOTIDE SEQUENCE [LARGE SCALE MRNA] OF 1-873 (ISOFORM 2)</scope>
    <source>
        <strain>C57BL/6J</strain>
        <tissue>Bone</tissue>
        <tissue>Brain</tissue>
    </source>
</reference>
<reference key="3">
    <citation type="journal article" date="2009" name="PLoS Biol.">
        <title>Lineage-specific biology revealed by a finished genome assembly of the mouse.</title>
        <authorList>
            <person name="Church D.M."/>
            <person name="Goodstadt L."/>
            <person name="Hillier L.W."/>
            <person name="Zody M.C."/>
            <person name="Goldstein S."/>
            <person name="She X."/>
            <person name="Bult C.J."/>
            <person name="Agarwala R."/>
            <person name="Cherry J.L."/>
            <person name="DiCuccio M."/>
            <person name="Hlavina W."/>
            <person name="Kapustin Y."/>
            <person name="Meric P."/>
            <person name="Maglott D."/>
            <person name="Birtle Z."/>
            <person name="Marques A.C."/>
            <person name="Graves T."/>
            <person name="Zhou S."/>
            <person name="Teague B."/>
            <person name="Potamousis K."/>
            <person name="Churas C."/>
            <person name="Place M."/>
            <person name="Herschleb J."/>
            <person name="Runnheim R."/>
            <person name="Forrest D."/>
            <person name="Amos-Landgraf J."/>
            <person name="Schwartz D.C."/>
            <person name="Cheng Z."/>
            <person name="Lindblad-Toh K."/>
            <person name="Eichler E.E."/>
            <person name="Ponting C.P."/>
        </authorList>
    </citation>
    <scope>NUCLEOTIDE SEQUENCE [LARGE SCALE GENOMIC DNA]</scope>
    <source>
        <strain>C57BL/6J</strain>
    </source>
</reference>
<reference key="4">
    <citation type="journal article" date="2004" name="Genome Res.">
        <title>The status, quality, and expansion of the NIH full-length cDNA project: the Mammalian Gene Collection (MGC).</title>
        <authorList>
            <consortium name="The MGC Project Team"/>
        </authorList>
    </citation>
    <scope>NUCLEOTIDE SEQUENCE [LARGE SCALE MRNA] OF 1032-2050 (ISOFORM 1)</scope>
    <source>
        <strain>FVB/N</strain>
        <tissue>Colon</tissue>
    </source>
</reference>
<reference key="5">
    <citation type="journal article" date="2005" name="J. Biol. Chem.">
        <title>Identification of the surfactant protein A receptor 210 as the unconventional myosin 18A.</title>
        <authorList>
            <person name="Yang C.H."/>
            <person name="Szeliga J."/>
            <person name="Jordan J."/>
            <person name="Faske S."/>
            <person name="Sever-Chroneos Z."/>
            <person name="Dorsett B."/>
            <person name="Christian R.E."/>
            <person name="Settlage R.E."/>
            <person name="Shabanowitz J."/>
            <person name="Hunt D.F."/>
            <person name="Whitsett J.A."/>
            <person name="Chroneos Z.C."/>
        </authorList>
    </citation>
    <scope>NUCLEOTIDE SEQUENCE [MRNA] OF 1933-2050 (ISOFORMS 1/4/5/7)</scope>
    <scope>IDENTIFICATION BY MASS SPECTROMETRY</scope>
    <source>
        <strain>C57BL/6J</strain>
        <tissue>Alveolus</tissue>
    </source>
</reference>
<reference key="6">
    <citation type="journal article" date="2000" name="Biochem. Biophys. Res. Commun.">
        <title>A novel protein MAJN binds to Jak3 and inhibits apoptosis induced by IL-2 deprival.</title>
        <authorList>
            <person name="Ji H."/>
            <person name="Zhai Q."/>
            <person name="Zhu J."/>
            <person name="Yan M."/>
            <person name="Sun L."/>
            <person name="Liu X."/>
            <person name="Zheng Z."/>
        </authorList>
    </citation>
    <scope>INTERACTION WITH JAK3</scope>
</reference>
<reference key="7">
    <citation type="journal article" date="2003" name="J. Biochem.">
        <title>Genome structure and differential expression of two isoforms of a novel PDZ-containing myosin (MysPDZ) (Myo18A).</title>
        <authorList>
            <person name="Mori K."/>
            <person name="Furusawa T."/>
            <person name="Okubo T."/>
            <person name="Inoue T."/>
            <person name="Ikawa S."/>
            <person name="Yanai N."/>
            <person name="Mori K.J."/>
            <person name="Obinata M."/>
        </authorList>
    </citation>
    <scope>ALTERNATIVE SPLICING (ISOFORMS 1 AND 2)</scope>
    <scope>SUBCELLULAR LOCATION (ISOFORMS 1 AND 2)</scope>
    <scope>DIFFERENTIAL EXPRESSION</scope>
    <source>
        <tissue>Spleen</tissue>
    </source>
</reference>
<reference key="8">
    <citation type="journal article" date="2004" name="Biochem. J.">
        <title>A novel 110 kDa form of myosin XVIIIA (MysPDZ) is tyrosine-phosphorylated after colony-stimulating factor-1 receptor signalling.</title>
        <authorList>
            <person name="Cross M."/>
            <person name="Csar X.F."/>
            <person name="Wilson N.J."/>
            <person name="Manes G."/>
            <person name="Addona T.A."/>
            <person name="Marks D.C."/>
            <person name="Whitty G.A."/>
            <person name="Ashman K."/>
            <person name="Hamilton J.A."/>
        </authorList>
    </citation>
    <scope>PHOSPHORYLATION</scope>
    <scope>IDENTIFICATION BY MASS SPECTROMETRY</scope>
</reference>
<reference key="9">
    <citation type="journal article" date="2005" name="Biochem. Biophys. Res. Commun.">
        <title>Subcellular localization and dynamics of MysPDZ (Myo18A) in live mammalian cells.</title>
        <authorList>
            <person name="Mori K."/>
            <person name="Matsuda K."/>
            <person name="Furusawa T."/>
            <person name="Kawata M."/>
            <person name="Inoue T."/>
            <person name="Obinata M."/>
        </authorList>
    </citation>
    <scope>HOMODIMER</scope>
    <scope>SUBCELLULAR LOCATION</scope>
    <scope>INTERACTION WITH ACTIN</scope>
</reference>
<reference key="10">
    <citation type="journal article" date="2006" name="Mol. Cell. Proteomics">
        <title>Comprehensive identification of phosphorylation sites in postsynaptic density preparations.</title>
        <authorList>
            <person name="Trinidad J.C."/>
            <person name="Specht C.G."/>
            <person name="Thalhammer A."/>
            <person name="Schoepfer R."/>
            <person name="Burlingame A.L."/>
        </authorList>
    </citation>
    <scope>PHOSPHORYLATION [LARGE SCALE ANALYSIS] AT SER-340 (ISOFORM 6)</scope>
    <scope>IDENTIFICATION BY MASS SPECTROMETRY [LARGE SCALE ANALYSIS]</scope>
    <source>
        <tissue>Brain</tissue>
    </source>
</reference>
<reference key="11">
    <citation type="journal article" date="2007" name="Proc. Natl. Acad. Sci. U.S.A.">
        <title>Large-scale phosphorylation analysis of mouse liver.</title>
        <authorList>
            <person name="Villen J."/>
            <person name="Beausoleil S.A."/>
            <person name="Gerber S.A."/>
            <person name="Gygi S.P."/>
        </authorList>
    </citation>
    <scope>PHOSPHORYLATION [LARGE SCALE ANALYSIS] AT SER-72; SER-83; SER-164; SER-1966; SER-2037 AND SER-2039</scope>
    <scope>IDENTIFICATION BY MASS SPECTROMETRY [LARGE SCALE ANALYSIS]</scope>
    <source>
        <tissue>Liver</tissue>
    </source>
</reference>
<reference key="12">
    <citation type="journal article" date="2008" name="J. Proteome Res.">
        <title>Specific phosphopeptide enrichment with immobilized titanium ion affinity chromatography adsorbent for phosphoproteome analysis.</title>
        <authorList>
            <person name="Zhou H."/>
            <person name="Ye M."/>
            <person name="Dong J."/>
            <person name="Han G."/>
            <person name="Jiang X."/>
            <person name="Wu R."/>
            <person name="Zou H."/>
        </authorList>
    </citation>
    <scope>PHOSPHORYLATION [LARGE SCALE ANALYSIS] AT SER-2037 AND SER-2039</scope>
    <scope>IDENTIFICATION BY MASS SPECTROMETRY [LARGE SCALE ANALYSIS]</scope>
    <source>
        <tissue>Liver</tissue>
    </source>
</reference>
<reference key="13">
    <citation type="journal article" date="2009" name="Cell">
        <title>GOLPH3 bridges phosphatidylinositol-4- phosphate and actomyosin to stretch and shape the Golgi to promote budding.</title>
        <authorList>
            <person name="Dippold H.C."/>
            <person name="Ng M.M."/>
            <person name="Farber-Katz S.E."/>
            <person name="Lee S.K."/>
            <person name="Kerr M.L."/>
            <person name="Peterman M.C."/>
            <person name="Sim R."/>
            <person name="Wiharto P.A."/>
            <person name="Galbraith K.A."/>
            <person name="Madhavarapu S."/>
            <person name="Fuchs G.J."/>
            <person name="Meerloo T."/>
            <person name="Farquhar M.G."/>
            <person name="Zhou H."/>
            <person name="Field S.J."/>
        </authorList>
    </citation>
    <scope>FUNCTION IN GOLGI ORGANIZATION</scope>
    <scope>MUTAGENESIS OF 503-GLY-LYS-504</scope>
</reference>
<reference key="14">
    <citation type="journal article" date="2010" name="Cell">
        <title>A tissue-specific atlas of mouse protein phosphorylation and expression.</title>
        <authorList>
            <person name="Huttlin E.L."/>
            <person name="Jedrychowski M.P."/>
            <person name="Elias J.E."/>
            <person name="Goswami T."/>
            <person name="Rad R."/>
            <person name="Beausoleil S.A."/>
            <person name="Villen J."/>
            <person name="Haas W."/>
            <person name="Sowa M.E."/>
            <person name="Gygi S.P."/>
        </authorList>
    </citation>
    <scope>PHOSPHORYLATION [LARGE SCALE ANALYSIS] AT SER-72; SER-83; SER-102; SER-103; SER-157; SER-160; SER-164; SER-983; SER-1966; SER-1994; SER-2016; SER-2032; SER-2037; SER-2039 AND THR-2041</scope>
    <scope>IDENTIFICATION BY MASS SPECTROMETRY [LARGE SCALE ANALYSIS]</scope>
    <source>
        <tissue>Brain</tissue>
        <tissue>Brown adipose tissue</tissue>
        <tissue>Heart</tissue>
        <tissue>Kidney</tissue>
        <tissue>Liver</tissue>
        <tissue>Lung</tissue>
        <tissue>Pancreas</tissue>
        <tissue>Spleen</tissue>
        <tissue>Testis</tissue>
    </source>
</reference>
<reference key="15">
    <citation type="journal article" date="2011" name="J. Biol. Chem.">
        <title>Surfactant protein A (SP-A)-mediated clearance of Staphylococcus aureus involves binding of SP-A to the staphylococcal adhesin eap and the macrophage receptors SP-A receptor 210 and scavenger receptor class A.</title>
        <authorList>
            <person name="Sever-Chroneos Z."/>
            <person name="Krupa A."/>
            <person name="Davis J."/>
            <person name="Hasan M."/>
            <person name="Yang C.H."/>
            <person name="Szeliga J."/>
            <person name="Herrmann M."/>
            <person name="Hussain M."/>
            <person name="Geisbrecht B.V."/>
            <person name="Kobzik L."/>
            <person name="Chroneos Z.C."/>
        </authorList>
    </citation>
    <scope>FUNCTION</scope>
</reference>
<reference key="16">
    <citation type="journal article" date="2015" name="PLoS ONE">
        <title>SP-R210 (Myo18A) isoforms as intrinsic modulators of macrophage priming and activation.</title>
        <authorList>
            <person name="Yang L."/>
            <person name="Carrillo M."/>
            <person name="Wu Y.M."/>
            <person name="DiAngelo S.L."/>
            <person name="Silveyra P."/>
            <person name="Umstead T.M."/>
            <person name="Halstead E.S."/>
            <person name="Davies M.L."/>
            <person name="Hu S."/>
            <person name="Floros J."/>
            <person name="McCormack F.X."/>
            <person name="Christensen N.D."/>
            <person name="Chroneos Z.C."/>
        </authorList>
    </citation>
    <scope>FUNCTION</scope>
    <scope>TISSUE SPECIFICITY</scope>
</reference>
<organism>
    <name type="scientific">Mus musculus</name>
    <name type="common">Mouse</name>
    <dbReference type="NCBI Taxonomy" id="10090"/>
    <lineage>
        <taxon>Eukaryota</taxon>
        <taxon>Metazoa</taxon>
        <taxon>Chordata</taxon>
        <taxon>Craniata</taxon>
        <taxon>Vertebrata</taxon>
        <taxon>Euteleostomi</taxon>
        <taxon>Mammalia</taxon>
        <taxon>Eutheria</taxon>
        <taxon>Euarchontoglires</taxon>
        <taxon>Glires</taxon>
        <taxon>Rodentia</taxon>
        <taxon>Myomorpha</taxon>
        <taxon>Muroidea</taxon>
        <taxon>Muridae</taxon>
        <taxon>Murinae</taxon>
        <taxon>Mus</taxon>
        <taxon>Mus</taxon>
    </lineage>
</organism>
<dbReference type="EMBL" id="AB026497">
    <property type="protein sequence ID" value="BAA93660.1"/>
    <property type="molecule type" value="mRNA"/>
</dbReference>
<dbReference type="EMBL" id="AK137574">
    <property type="protein sequence ID" value="BAE23413.1"/>
    <property type="molecule type" value="mRNA"/>
</dbReference>
<dbReference type="EMBL" id="AK147584">
    <property type="protein sequence ID" value="BAE28009.1"/>
    <property type="molecule type" value="mRNA"/>
</dbReference>
<dbReference type="EMBL" id="AK171342">
    <property type="protein sequence ID" value="BAE42402.1"/>
    <property type="molecule type" value="mRNA"/>
</dbReference>
<dbReference type="EMBL" id="AL591065">
    <property type="status" value="NOT_ANNOTATED_CDS"/>
    <property type="molecule type" value="Genomic_DNA"/>
</dbReference>
<dbReference type="EMBL" id="BC046638">
    <property type="protein sequence ID" value="AAH46638.1"/>
    <property type="molecule type" value="mRNA"/>
</dbReference>
<dbReference type="EMBL" id="AY692137">
    <property type="protein sequence ID" value="AAV80765.1"/>
    <property type="molecule type" value="mRNA"/>
</dbReference>
<dbReference type="EMBL" id="AY692138">
    <property type="protein sequence ID" value="AAV80766.1"/>
    <property type="molecule type" value="mRNA"/>
</dbReference>
<dbReference type="EMBL" id="AY692139">
    <property type="protein sequence ID" value="AAV80767.1"/>
    <property type="molecule type" value="mRNA"/>
</dbReference>
<dbReference type="CCDS" id="CCDS25085.1">
    <molecule id="Q9JMH9-1"/>
</dbReference>
<dbReference type="RefSeq" id="NP_001278141.1">
    <property type="nucleotide sequence ID" value="NM_001291212.1"/>
</dbReference>
<dbReference type="RefSeq" id="NP_001278142.1">
    <property type="nucleotide sequence ID" value="NM_001291213.1"/>
</dbReference>
<dbReference type="RefSeq" id="NP_001278143.1">
    <property type="nucleotide sequence ID" value="NM_001291214.1"/>
</dbReference>
<dbReference type="RefSeq" id="NP_001278144.1">
    <property type="nucleotide sequence ID" value="NM_001291215.1"/>
</dbReference>
<dbReference type="RefSeq" id="NP_035716.1">
    <molecule id="Q9JMH9-1"/>
    <property type="nucleotide sequence ID" value="NM_011586.4"/>
</dbReference>
<dbReference type="RefSeq" id="XP_006533667.1">
    <molecule id="Q9JMH9-3"/>
    <property type="nucleotide sequence ID" value="XM_006533604.5"/>
</dbReference>
<dbReference type="RefSeq" id="XP_006533669.1">
    <property type="nucleotide sequence ID" value="XM_006533606.2"/>
</dbReference>
<dbReference type="RefSeq" id="XP_006533677.2">
    <property type="nucleotide sequence ID" value="XM_006533614.3"/>
</dbReference>
<dbReference type="RefSeq" id="XP_017170115.1">
    <property type="nucleotide sequence ID" value="XM_017314626.1"/>
</dbReference>
<dbReference type="SMR" id="Q9JMH9"/>
<dbReference type="BioGRID" id="237427">
    <property type="interactions" value="22"/>
</dbReference>
<dbReference type="FunCoup" id="Q9JMH9">
    <property type="interactions" value="1217"/>
</dbReference>
<dbReference type="IntAct" id="Q9JMH9">
    <property type="interactions" value="5"/>
</dbReference>
<dbReference type="MINT" id="Q9JMH9"/>
<dbReference type="STRING" id="10090.ENSMUSP00000130696"/>
<dbReference type="ChEMBL" id="CHEMBL4879522"/>
<dbReference type="GlyGen" id="Q9JMH9">
    <property type="glycosylation" value="3 sites, 1 N-linked glycan (1 site), 1 O-linked glycan (1 site)"/>
</dbReference>
<dbReference type="iPTMnet" id="Q9JMH9"/>
<dbReference type="PhosphoSitePlus" id="Q9JMH9"/>
<dbReference type="SwissPalm" id="Q9JMH9"/>
<dbReference type="jPOST" id="Q9JMH9"/>
<dbReference type="PaxDb" id="10090-ENSMUSP00000130696"/>
<dbReference type="PeptideAtlas" id="Q9JMH9"/>
<dbReference type="ProteomicsDB" id="252618">
    <molecule id="Q9JMH9-3"/>
</dbReference>
<dbReference type="ProteomicsDB" id="252619">
    <molecule id="Q9JMH9-1"/>
</dbReference>
<dbReference type="ProteomicsDB" id="252620">
    <molecule id="Q9JMH9-2"/>
</dbReference>
<dbReference type="ProteomicsDB" id="252621">
    <molecule id="Q9JMH9-4"/>
</dbReference>
<dbReference type="ProteomicsDB" id="252622">
    <molecule id="Q9JMH9-5"/>
</dbReference>
<dbReference type="ProteomicsDB" id="252623">
    <molecule id="Q9JMH9-6"/>
</dbReference>
<dbReference type="ProteomicsDB" id="252624">
    <molecule id="Q9JMH9-7"/>
</dbReference>
<dbReference type="Pumba" id="Q9JMH9"/>
<dbReference type="Antibodypedia" id="7183">
    <property type="antibodies" value="85 antibodies from 23 providers"/>
</dbReference>
<dbReference type="DNASU" id="360013"/>
<dbReference type="Ensembl" id="ENSMUST00000092884.11">
    <molecule id="Q9JMH9-5"/>
    <property type="protein sequence ID" value="ENSMUSP00000090560.5"/>
    <property type="gene ID" value="ENSMUSG00000000631.21"/>
</dbReference>
<dbReference type="Ensembl" id="ENSMUST00000092887.11">
    <molecule id="Q9JMH9-1"/>
    <property type="protein sequence ID" value="ENSMUSP00000090563.5"/>
    <property type="gene ID" value="ENSMUSG00000000631.21"/>
</dbReference>
<dbReference type="Ensembl" id="ENSMUST00000102488.8">
    <molecule id="Q9JMH9-1"/>
    <property type="protein sequence ID" value="ENSMUSP00000099546.2"/>
    <property type="gene ID" value="ENSMUSG00000000631.21"/>
</dbReference>
<dbReference type="Ensembl" id="ENSMUST00000108375.9">
    <molecule id="Q9JMH9-3"/>
    <property type="protein sequence ID" value="ENSMUSP00000104012.3"/>
    <property type="gene ID" value="ENSMUSG00000000631.21"/>
</dbReference>
<dbReference type="Ensembl" id="ENSMUST00000108376.9">
    <molecule id="Q9JMH9-4"/>
    <property type="protein sequence ID" value="ENSMUSP00000104013.3"/>
    <property type="gene ID" value="ENSMUSG00000000631.21"/>
</dbReference>
<dbReference type="Ensembl" id="ENSMUST00000130305.9">
    <molecule id="Q9JMH9-7"/>
    <property type="protein sequence ID" value="ENSMUSP00000119574.3"/>
    <property type="gene ID" value="ENSMUSG00000000631.21"/>
</dbReference>
<dbReference type="Ensembl" id="ENSMUST00000130627.9">
    <molecule id="Q9JMH9-6"/>
    <property type="protein sequence ID" value="ENSMUSP00000119839.3"/>
    <property type="gene ID" value="ENSMUSG00000000631.21"/>
</dbReference>
<dbReference type="Ensembl" id="ENSMUST00000164334.8">
    <molecule id="Q9JMH9-2"/>
    <property type="protein sequence ID" value="ENSMUSP00000131771.2"/>
    <property type="gene ID" value="ENSMUSG00000000631.21"/>
</dbReference>
<dbReference type="GeneID" id="360013"/>
<dbReference type="KEGG" id="mmu:360013"/>
<dbReference type="UCSC" id="uc007khg.2">
    <molecule id="Q9JMH9-1"/>
    <property type="organism name" value="mouse"/>
</dbReference>
<dbReference type="UCSC" id="uc007khh.2">
    <molecule id="Q9JMH9-5"/>
    <property type="organism name" value="mouse"/>
</dbReference>
<dbReference type="UCSC" id="uc007khi.2">
    <molecule id="Q9JMH9-7"/>
    <property type="organism name" value="mouse"/>
</dbReference>
<dbReference type="AGR" id="MGI:2667185"/>
<dbReference type="CTD" id="399687"/>
<dbReference type="MGI" id="MGI:2667185">
    <property type="gene designation" value="Myo18a"/>
</dbReference>
<dbReference type="VEuPathDB" id="HostDB:ENSMUSG00000000631"/>
<dbReference type="eggNOG" id="KOG0161">
    <property type="taxonomic scope" value="Eukaryota"/>
</dbReference>
<dbReference type="GeneTree" id="ENSGT00940000155768"/>
<dbReference type="InParanoid" id="Q9JMH9"/>
<dbReference type="OMA" id="HHFFLGH"/>
<dbReference type="OrthoDB" id="2505895at2759"/>
<dbReference type="PhylomeDB" id="Q9JMH9"/>
<dbReference type="BioGRID-ORCS" id="360013">
    <property type="hits" value="1 hit in 77 CRISPR screens"/>
</dbReference>
<dbReference type="CD-CODE" id="CE726F99">
    <property type="entry name" value="Postsynaptic density"/>
</dbReference>
<dbReference type="ChiTaRS" id="Myo18a">
    <property type="organism name" value="mouse"/>
</dbReference>
<dbReference type="PRO" id="PR:Q9JMH9"/>
<dbReference type="Proteomes" id="UP000000589">
    <property type="component" value="Chromosome 11"/>
</dbReference>
<dbReference type="RNAct" id="Q9JMH9">
    <property type="molecule type" value="protein"/>
</dbReference>
<dbReference type="Bgee" id="ENSMUSG00000000631">
    <property type="expression patterns" value="Expressed in hindlimb stylopod muscle and 265 other cell types or tissues"/>
</dbReference>
<dbReference type="ExpressionAtlas" id="Q9JMH9">
    <property type="expression patterns" value="baseline and differential"/>
</dbReference>
<dbReference type="GO" id="GO:0005903">
    <property type="term" value="C:brush border"/>
    <property type="evidence" value="ECO:0000314"/>
    <property type="project" value="UniProtKB"/>
</dbReference>
<dbReference type="GO" id="GO:0005856">
    <property type="term" value="C:cytoskeleton"/>
    <property type="evidence" value="ECO:0000314"/>
    <property type="project" value="MGI"/>
</dbReference>
<dbReference type="GO" id="GO:0005793">
    <property type="term" value="C:endoplasmic reticulum-Golgi intermediate compartment"/>
    <property type="evidence" value="ECO:0007669"/>
    <property type="project" value="UniProtKB-SubCell"/>
</dbReference>
<dbReference type="GO" id="GO:0000139">
    <property type="term" value="C:Golgi membrane"/>
    <property type="evidence" value="ECO:0007669"/>
    <property type="project" value="GOC"/>
</dbReference>
<dbReference type="GO" id="GO:0005815">
    <property type="term" value="C:microtubule organizing center"/>
    <property type="evidence" value="ECO:0007669"/>
    <property type="project" value="UniProtKB-SubCell"/>
</dbReference>
<dbReference type="GO" id="GO:0016459">
    <property type="term" value="C:myosin complex"/>
    <property type="evidence" value="ECO:0007669"/>
    <property type="project" value="UniProtKB-KW"/>
</dbReference>
<dbReference type="GO" id="GO:0045335">
    <property type="term" value="C:phagocytic vesicle"/>
    <property type="evidence" value="ECO:0000314"/>
    <property type="project" value="MGI"/>
</dbReference>
<dbReference type="GO" id="GO:0005802">
    <property type="term" value="C:trans-Golgi network"/>
    <property type="evidence" value="ECO:0000250"/>
    <property type="project" value="UniProtKB"/>
</dbReference>
<dbReference type="GO" id="GO:0043531">
    <property type="term" value="F:ADP binding"/>
    <property type="evidence" value="ECO:0000250"/>
    <property type="project" value="UniProtKB"/>
</dbReference>
<dbReference type="GO" id="GO:0005524">
    <property type="term" value="F:ATP binding"/>
    <property type="evidence" value="ECO:0000250"/>
    <property type="project" value="UniProtKB"/>
</dbReference>
<dbReference type="GO" id="GO:0031032">
    <property type="term" value="P:actomyosin structure organization"/>
    <property type="evidence" value="ECO:0000250"/>
    <property type="project" value="UniProtKB"/>
</dbReference>
<dbReference type="GO" id="GO:0016477">
    <property type="term" value="P:cell migration"/>
    <property type="evidence" value="ECO:0000250"/>
    <property type="project" value="UniProtKB"/>
</dbReference>
<dbReference type="GO" id="GO:0071346">
    <property type="term" value="P:cellular response to type II interferon"/>
    <property type="evidence" value="ECO:0000314"/>
    <property type="project" value="MGI"/>
</dbReference>
<dbReference type="GO" id="GO:0007030">
    <property type="term" value="P:Golgi organization"/>
    <property type="evidence" value="ECO:0000250"/>
    <property type="project" value="UniProtKB"/>
</dbReference>
<dbReference type="GO" id="GO:0048194">
    <property type="term" value="P:Golgi vesicle budding"/>
    <property type="evidence" value="ECO:0000250"/>
    <property type="project" value="UniProtKB"/>
</dbReference>
<dbReference type="GO" id="GO:1903028">
    <property type="term" value="P:positive regulation of opsonization"/>
    <property type="evidence" value="ECO:0000315"/>
    <property type="project" value="UniProtKB"/>
</dbReference>
<dbReference type="GO" id="GO:0050714">
    <property type="term" value="P:positive regulation of protein secretion"/>
    <property type="evidence" value="ECO:0000250"/>
    <property type="project" value="UniProtKB"/>
</dbReference>
<dbReference type="GO" id="GO:0043030">
    <property type="term" value="P:regulation of macrophage activation"/>
    <property type="evidence" value="ECO:0000315"/>
    <property type="project" value="UniProtKB"/>
</dbReference>
<dbReference type="CDD" id="cd01386">
    <property type="entry name" value="MYSc_Myo18"/>
    <property type="match status" value="1"/>
</dbReference>
<dbReference type="CDD" id="cd06747">
    <property type="entry name" value="PDZ_MYO18-like"/>
    <property type="match status" value="1"/>
</dbReference>
<dbReference type="FunFam" id="1.20.5.1160:FF:000006">
    <property type="entry name" value="Myosin-XVIIIa isoform a"/>
    <property type="match status" value="1"/>
</dbReference>
<dbReference type="FunFam" id="1.10.10.820:FF:000004">
    <property type="entry name" value="unconventional myosin-XVIIIa isoform X1"/>
    <property type="match status" value="1"/>
</dbReference>
<dbReference type="FunFam" id="2.30.42.10:FF:000059">
    <property type="entry name" value="unconventional myosin-XVIIIa isoform X1"/>
    <property type="match status" value="1"/>
</dbReference>
<dbReference type="FunFam" id="3.30.70.1590:FF:000004">
    <property type="entry name" value="unconventional myosin-XVIIIa isoform X1"/>
    <property type="match status" value="1"/>
</dbReference>
<dbReference type="FunFam" id="3.40.850.10:FF:000020">
    <property type="entry name" value="unconventional myosin-XVIIIa isoform X1"/>
    <property type="match status" value="1"/>
</dbReference>
<dbReference type="FunFam" id="4.10.270.10:FF:000002">
    <property type="entry name" value="unconventional myosin-XVIIIa isoform X1"/>
    <property type="match status" value="1"/>
</dbReference>
<dbReference type="FunFam" id="1.20.120.720:FF:000007">
    <property type="entry name" value="unconventional myosin-XVIIIa isoform X2"/>
    <property type="match status" value="1"/>
</dbReference>
<dbReference type="FunFam" id="1.20.58.530:FF:000011">
    <property type="entry name" value="unconventional myosin-XVIIIa isoform X2"/>
    <property type="match status" value="1"/>
</dbReference>
<dbReference type="Gene3D" id="1.10.10.820">
    <property type="match status" value="1"/>
</dbReference>
<dbReference type="Gene3D" id="1.20.58.530">
    <property type="match status" value="1"/>
</dbReference>
<dbReference type="Gene3D" id="2.30.42.10">
    <property type="match status" value="1"/>
</dbReference>
<dbReference type="Gene3D" id="3.30.70.1590">
    <property type="match status" value="1"/>
</dbReference>
<dbReference type="Gene3D" id="3.40.850.10">
    <property type="entry name" value="Kinesin motor domain"/>
    <property type="match status" value="1"/>
</dbReference>
<dbReference type="Gene3D" id="1.20.120.720">
    <property type="entry name" value="Myosin VI head, motor domain, U50 subdomain"/>
    <property type="match status" value="1"/>
</dbReference>
<dbReference type="Gene3D" id="4.10.270.10">
    <property type="entry name" value="Myosin, subunit A"/>
    <property type="match status" value="1"/>
</dbReference>
<dbReference type="Gene3D" id="1.20.5.1160">
    <property type="entry name" value="Vasodilator-stimulated phosphoprotein"/>
    <property type="match status" value="1"/>
</dbReference>
<dbReference type="InterPro" id="IPR000048">
    <property type="entry name" value="IQ_motif_EF-hand-BS"/>
</dbReference>
<dbReference type="InterPro" id="IPR036961">
    <property type="entry name" value="Kinesin_motor_dom_sf"/>
</dbReference>
<dbReference type="InterPro" id="IPR001609">
    <property type="entry name" value="Myosin_head_motor_dom-like"/>
</dbReference>
<dbReference type="InterPro" id="IPR004009">
    <property type="entry name" value="Myosin_N"/>
</dbReference>
<dbReference type="InterPro" id="IPR002928">
    <property type="entry name" value="Myosin_tail"/>
</dbReference>
<dbReference type="InterPro" id="IPR036064">
    <property type="entry name" value="MYSc_Myo18"/>
</dbReference>
<dbReference type="InterPro" id="IPR027417">
    <property type="entry name" value="P-loop_NTPase"/>
</dbReference>
<dbReference type="InterPro" id="IPR001478">
    <property type="entry name" value="PDZ"/>
</dbReference>
<dbReference type="InterPro" id="IPR036034">
    <property type="entry name" value="PDZ_sf"/>
</dbReference>
<dbReference type="PANTHER" id="PTHR45615">
    <property type="entry name" value="MYOSIN HEAVY CHAIN, NON-MUSCLE"/>
    <property type="match status" value="1"/>
</dbReference>
<dbReference type="PANTHER" id="PTHR45615:SF13">
    <property type="entry name" value="UNCONVENTIONAL MYOSIN-XVIIIA"/>
    <property type="match status" value="1"/>
</dbReference>
<dbReference type="Pfam" id="PF00063">
    <property type="entry name" value="Myosin_head"/>
    <property type="match status" value="2"/>
</dbReference>
<dbReference type="Pfam" id="PF01576">
    <property type="entry name" value="Myosin_tail_1"/>
    <property type="match status" value="1"/>
</dbReference>
<dbReference type="Pfam" id="PF00595">
    <property type="entry name" value="PDZ"/>
    <property type="match status" value="1"/>
</dbReference>
<dbReference type="Pfam" id="PF24556">
    <property type="entry name" value="SH3_Myosin-XVIIIa"/>
    <property type="match status" value="1"/>
</dbReference>
<dbReference type="PRINTS" id="PR00193">
    <property type="entry name" value="MYOSINHEAVY"/>
</dbReference>
<dbReference type="SMART" id="SM00015">
    <property type="entry name" value="IQ"/>
    <property type="match status" value="1"/>
</dbReference>
<dbReference type="SMART" id="SM00242">
    <property type="entry name" value="MYSc"/>
    <property type="match status" value="1"/>
</dbReference>
<dbReference type="SMART" id="SM00228">
    <property type="entry name" value="PDZ"/>
    <property type="match status" value="1"/>
</dbReference>
<dbReference type="SUPFAM" id="SSF90257">
    <property type="entry name" value="Myosin rod fragments"/>
    <property type="match status" value="1"/>
</dbReference>
<dbReference type="SUPFAM" id="SSF52540">
    <property type="entry name" value="P-loop containing nucleoside triphosphate hydrolases"/>
    <property type="match status" value="1"/>
</dbReference>
<dbReference type="SUPFAM" id="SSF50156">
    <property type="entry name" value="PDZ domain-like"/>
    <property type="match status" value="1"/>
</dbReference>
<dbReference type="PROSITE" id="PS50096">
    <property type="entry name" value="IQ"/>
    <property type="match status" value="1"/>
</dbReference>
<dbReference type="PROSITE" id="PS51456">
    <property type="entry name" value="MYOSIN_MOTOR"/>
    <property type="match status" value="1"/>
</dbReference>
<dbReference type="PROSITE" id="PS50106">
    <property type="entry name" value="PDZ"/>
    <property type="match status" value="1"/>
</dbReference>
<dbReference type="PROSITE" id="PS51844">
    <property type="entry name" value="SH3_LIKE"/>
    <property type="match status" value="1"/>
</dbReference>
<accession>Q9JMH9</accession>
<accession>Q3TBB2</accession>
<accession>Q3UH48</accession>
<accession>Q3UV60</accession>
<accession>Q5QD54</accession>
<accession>Q5QD55</accession>
<accession>Q5QD56</accession>
<accession>Q5SYN8</accession>
<accession>Q5SYN9</accession>
<accession>Q5SYP0</accession>
<accession>Q5SYP1</accession>
<accession>Q811D7</accession>
<name>MY18A_MOUSE</name>
<keyword id="KW-0025">Alternative splicing</keyword>
<keyword id="KW-0067">ATP-binding</keyword>
<keyword id="KW-0175">Coiled coil</keyword>
<keyword id="KW-0963">Cytoplasm</keyword>
<keyword id="KW-0206">Cytoskeleton</keyword>
<keyword id="KW-0333">Golgi apparatus</keyword>
<keyword id="KW-0505">Motor protein</keyword>
<keyword id="KW-0518">Myosin</keyword>
<keyword id="KW-0547">Nucleotide-binding</keyword>
<keyword id="KW-0597">Phosphoprotein</keyword>
<keyword id="KW-1185">Reference proteome</keyword>